<name>SUCC_PSECP</name>
<proteinExistence type="inferred from homology"/>
<sequence>MDLFEYQARDMFEAHGVPVLAGIVAYTPEEAKAAAEKIGGVTVVKAQVKVGGRGKAGGVKVAKSADEALEHSTNILGMDIKGHTVNKVMIAQGADIAEEYYFSVLLDRANRNYLAMCSVEGGMEIEQLAVERPEALAKIAIDPAVGIDQAKADEIVAAAGFAEELRGKVADVILKLWDVFKKEDATLVEVNPLVKTGAGDIVALDGKVSLDENAEFRHAKHAQLEDKDAADPLEAKAKAQDLNYVKLDGEVGIIGNGAGLVMSTLDVVAYAGENHGNVKPANFLDIGGGASAEVMAAGLDVILGDEQVKSVFVNVFGGITACDAVAKGIVGALAELGHTANKPLVVRLDGNNVEEGRRILNEANHPLVTLAATMDEGADKAAELANAAK</sequence>
<keyword id="KW-0067">ATP-binding</keyword>
<keyword id="KW-0436">Ligase</keyword>
<keyword id="KW-0460">Magnesium</keyword>
<keyword id="KW-0479">Metal-binding</keyword>
<keyword id="KW-0547">Nucleotide-binding</keyword>
<keyword id="KW-0816">Tricarboxylic acid cycle</keyword>
<dbReference type="EC" id="6.2.1.5" evidence="1"/>
<dbReference type="EMBL" id="CP001341">
    <property type="protein sequence ID" value="ACL38927.1"/>
    <property type="molecule type" value="Genomic_DNA"/>
</dbReference>
<dbReference type="RefSeq" id="WP_015936150.1">
    <property type="nucleotide sequence ID" value="NC_011886.1"/>
</dbReference>
<dbReference type="SMR" id="B8HDC2"/>
<dbReference type="STRING" id="452863.Achl_0932"/>
<dbReference type="KEGG" id="ach:Achl_0932"/>
<dbReference type="eggNOG" id="COG0045">
    <property type="taxonomic scope" value="Bacteria"/>
</dbReference>
<dbReference type="HOGENOM" id="CLU_037430_4_0_11"/>
<dbReference type="OrthoDB" id="9802602at2"/>
<dbReference type="UniPathway" id="UPA00223">
    <property type="reaction ID" value="UER00999"/>
</dbReference>
<dbReference type="Proteomes" id="UP000002505">
    <property type="component" value="Chromosome"/>
</dbReference>
<dbReference type="GO" id="GO:0005829">
    <property type="term" value="C:cytosol"/>
    <property type="evidence" value="ECO:0007669"/>
    <property type="project" value="TreeGrafter"/>
</dbReference>
<dbReference type="GO" id="GO:0042709">
    <property type="term" value="C:succinate-CoA ligase complex"/>
    <property type="evidence" value="ECO:0007669"/>
    <property type="project" value="TreeGrafter"/>
</dbReference>
<dbReference type="GO" id="GO:0005524">
    <property type="term" value="F:ATP binding"/>
    <property type="evidence" value="ECO:0007669"/>
    <property type="project" value="UniProtKB-UniRule"/>
</dbReference>
<dbReference type="GO" id="GO:0000287">
    <property type="term" value="F:magnesium ion binding"/>
    <property type="evidence" value="ECO:0007669"/>
    <property type="project" value="UniProtKB-UniRule"/>
</dbReference>
<dbReference type="GO" id="GO:0004775">
    <property type="term" value="F:succinate-CoA ligase (ADP-forming) activity"/>
    <property type="evidence" value="ECO:0007669"/>
    <property type="project" value="UniProtKB-UniRule"/>
</dbReference>
<dbReference type="GO" id="GO:0004776">
    <property type="term" value="F:succinate-CoA ligase (GDP-forming) activity"/>
    <property type="evidence" value="ECO:0007669"/>
    <property type="project" value="RHEA"/>
</dbReference>
<dbReference type="GO" id="GO:0006104">
    <property type="term" value="P:succinyl-CoA metabolic process"/>
    <property type="evidence" value="ECO:0007669"/>
    <property type="project" value="TreeGrafter"/>
</dbReference>
<dbReference type="GO" id="GO:0006099">
    <property type="term" value="P:tricarboxylic acid cycle"/>
    <property type="evidence" value="ECO:0007669"/>
    <property type="project" value="UniProtKB-UniRule"/>
</dbReference>
<dbReference type="FunFam" id="3.30.1490.20:FF:000014">
    <property type="entry name" value="Succinate--CoA ligase [ADP-forming] subunit beta"/>
    <property type="match status" value="1"/>
</dbReference>
<dbReference type="FunFam" id="3.30.470.20:FF:000002">
    <property type="entry name" value="Succinate--CoA ligase [ADP-forming] subunit beta"/>
    <property type="match status" value="1"/>
</dbReference>
<dbReference type="FunFam" id="3.40.50.261:FF:000007">
    <property type="entry name" value="Succinate--CoA ligase [ADP-forming] subunit beta"/>
    <property type="match status" value="1"/>
</dbReference>
<dbReference type="Gene3D" id="3.30.1490.20">
    <property type="entry name" value="ATP-grasp fold, A domain"/>
    <property type="match status" value="1"/>
</dbReference>
<dbReference type="Gene3D" id="3.30.470.20">
    <property type="entry name" value="ATP-grasp fold, B domain"/>
    <property type="match status" value="1"/>
</dbReference>
<dbReference type="Gene3D" id="3.40.50.261">
    <property type="entry name" value="Succinyl-CoA synthetase domains"/>
    <property type="match status" value="1"/>
</dbReference>
<dbReference type="HAMAP" id="MF_00558">
    <property type="entry name" value="Succ_CoA_beta"/>
    <property type="match status" value="1"/>
</dbReference>
<dbReference type="InterPro" id="IPR011761">
    <property type="entry name" value="ATP-grasp"/>
</dbReference>
<dbReference type="InterPro" id="IPR013650">
    <property type="entry name" value="ATP-grasp_succ-CoA_synth-type"/>
</dbReference>
<dbReference type="InterPro" id="IPR013815">
    <property type="entry name" value="ATP_grasp_subdomain_1"/>
</dbReference>
<dbReference type="InterPro" id="IPR017866">
    <property type="entry name" value="Succ-CoA_synthase_bsu_CS"/>
</dbReference>
<dbReference type="InterPro" id="IPR005811">
    <property type="entry name" value="SUCC_ACL_C"/>
</dbReference>
<dbReference type="InterPro" id="IPR005809">
    <property type="entry name" value="Succ_CoA_ligase-like_bsu"/>
</dbReference>
<dbReference type="InterPro" id="IPR016102">
    <property type="entry name" value="Succinyl-CoA_synth-like"/>
</dbReference>
<dbReference type="NCBIfam" id="NF001913">
    <property type="entry name" value="PRK00696.1"/>
    <property type="match status" value="1"/>
</dbReference>
<dbReference type="NCBIfam" id="TIGR01016">
    <property type="entry name" value="sucCoAbeta"/>
    <property type="match status" value="1"/>
</dbReference>
<dbReference type="PANTHER" id="PTHR11815:SF10">
    <property type="entry name" value="SUCCINATE--COA LIGASE [GDP-FORMING] SUBUNIT BETA, MITOCHONDRIAL"/>
    <property type="match status" value="1"/>
</dbReference>
<dbReference type="PANTHER" id="PTHR11815">
    <property type="entry name" value="SUCCINYL-COA SYNTHETASE BETA CHAIN"/>
    <property type="match status" value="1"/>
</dbReference>
<dbReference type="Pfam" id="PF08442">
    <property type="entry name" value="ATP-grasp_2"/>
    <property type="match status" value="1"/>
</dbReference>
<dbReference type="Pfam" id="PF00549">
    <property type="entry name" value="Ligase_CoA"/>
    <property type="match status" value="1"/>
</dbReference>
<dbReference type="PIRSF" id="PIRSF001554">
    <property type="entry name" value="SucCS_beta"/>
    <property type="match status" value="1"/>
</dbReference>
<dbReference type="SUPFAM" id="SSF56059">
    <property type="entry name" value="Glutathione synthetase ATP-binding domain-like"/>
    <property type="match status" value="1"/>
</dbReference>
<dbReference type="SUPFAM" id="SSF52210">
    <property type="entry name" value="Succinyl-CoA synthetase domains"/>
    <property type="match status" value="1"/>
</dbReference>
<dbReference type="PROSITE" id="PS50975">
    <property type="entry name" value="ATP_GRASP"/>
    <property type="match status" value="1"/>
</dbReference>
<dbReference type="PROSITE" id="PS01217">
    <property type="entry name" value="SUCCINYL_COA_LIG_3"/>
    <property type="match status" value="1"/>
</dbReference>
<reference key="1">
    <citation type="submission" date="2009-01" db="EMBL/GenBank/DDBJ databases">
        <title>Complete sequence of chromosome of Arthrobacter chlorophenolicus A6.</title>
        <authorList>
            <consortium name="US DOE Joint Genome Institute"/>
            <person name="Lucas S."/>
            <person name="Copeland A."/>
            <person name="Lapidus A."/>
            <person name="Glavina del Rio T."/>
            <person name="Tice H."/>
            <person name="Bruce D."/>
            <person name="Goodwin L."/>
            <person name="Pitluck S."/>
            <person name="Goltsman E."/>
            <person name="Clum A."/>
            <person name="Larimer F."/>
            <person name="Land M."/>
            <person name="Hauser L."/>
            <person name="Kyrpides N."/>
            <person name="Mikhailova N."/>
            <person name="Jansson J."/>
            <person name="Richardson P."/>
        </authorList>
    </citation>
    <scope>NUCLEOTIDE SEQUENCE [LARGE SCALE GENOMIC DNA]</scope>
    <source>
        <strain>ATCC 700700 / DSM 12829 / CIP 107037 / JCM 12360 / KCTC 9906 / NCIMB 13794 / A6</strain>
    </source>
</reference>
<evidence type="ECO:0000255" key="1">
    <source>
        <dbReference type="HAMAP-Rule" id="MF_00558"/>
    </source>
</evidence>
<gene>
    <name evidence="1" type="primary">sucC</name>
    <name type="ordered locus">Achl_0932</name>
</gene>
<accession>B8HDC2</accession>
<protein>
    <recommendedName>
        <fullName evidence="1">Succinate--CoA ligase [ADP-forming] subunit beta</fullName>
        <ecNumber evidence="1">6.2.1.5</ecNumber>
    </recommendedName>
    <alternativeName>
        <fullName evidence="1">Succinyl-CoA synthetase subunit beta</fullName>
        <shortName evidence="1">SCS-beta</shortName>
    </alternativeName>
</protein>
<organism>
    <name type="scientific">Pseudarthrobacter chlorophenolicus (strain ATCC 700700 / DSM 12829 / CIP 107037 / JCM 12360 / KCTC 9906 / NCIMB 13794 / A6)</name>
    <name type="common">Arthrobacter chlorophenolicus</name>
    <dbReference type="NCBI Taxonomy" id="452863"/>
    <lineage>
        <taxon>Bacteria</taxon>
        <taxon>Bacillati</taxon>
        <taxon>Actinomycetota</taxon>
        <taxon>Actinomycetes</taxon>
        <taxon>Micrococcales</taxon>
        <taxon>Micrococcaceae</taxon>
        <taxon>Pseudarthrobacter</taxon>
    </lineage>
</organism>
<feature type="chain" id="PRO_1000197693" description="Succinate--CoA ligase [ADP-forming] subunit beta">
    <location>
        <begin position="1"/>
        <end position="389"/>
    </location>
</feature>
<feature type="domain" description="ATP-grasp" evidence="1">
    <location>
        <begin position="9"/>
        <end position="236"/>
    </location>
</feature>
<feature type="binding site" evidence="1">
    <location>
        <position position="45"/>
    </location>
    <ligand>
        <name>ATP</name>
        <dbReference type="ChEBI" id="CHEBI:30616"/>
    </ligand>
</feature>
<feature type="binding site" evidence="1">
    <location>
        <begin position="52"/>
        <end position="54"/>
    </location>
    <ligand>
        <name>ATP</name>
        <dbReference type="ChEBI" id="CHEBI:30616"/>
    </ligand>
</feature>
<feature type="binding site" evidence="1">
    <location>
        <position position="94"/>
    </location>
    <ligand>
        <name>ATP</name>
        <dbReference type="ChEBI" id="CHEBI:30616"/>
    </ligand>
</feature>
<feature type="binding site" evidence="1">
    <location>
        <position position="99"/>
    </location>
    <ligand>
        <name>ATP</name>
        <dbReference type="ChEBI" id="CHEBI:30616"/>
    </ligand>
</feature>
<feature type="binding site" evidence="1">
    <location>
        <position position="191"/>
    </location>
    <ligand>
        <name>Mg(2+)</name>
        <dbReference type="ChEBI" id="CHEBI:18420"/>
    </ligand>
</feature>
<feature type="binding site" evidence="1">
    <location>
        <position position="205"/>
    </location>
    <ligand>
        <name>Mg(2+)</name>
        <dbReference type="ChEBI" id="CHEBI:18420"/>
    </ligand>
</feature>
<feature type="binding site" evidence="1">
    <location>
        <position position="256"/>
    </location>
    <ligand>
        <name>substrate</name>
        <note>ligand shared with subunit alpha</note>
    </ligand>
</feature>
<feature type="binding site" evidence="1">
    <location>
        <begin position="318"/>
        <end position="320"/>
    </location>
    <ligand>
        <name>substrate</name>
        <note>ligand shared with subunit alpha</note>
    </ligand>
</feature>
<comment type="function">
    <text evidence="1">Succinyl-CoA synthetase functions in the citric acid cycle (TCA), coupling the hydrolysis of succinyl-CoA to the synthesis of either ATP or GTP and thus represents the only step of substrate-level phosphorylation in the TCA. The beta subunit provides nucleotide specificity of the enzyme and binds the substrate succinate, while the binding sites for coenzyme A and phosphate are found in the alpha subunit.</text>
</comment>
<comment type="catalytic activity">
    <reaction evidence="1">
        <text>succinate + ATP + CoA = succinyl-CoA + ADP + phosphate</text>
        <dbReference type="Rhea" id="RHEA:17661"/>
        <dbReference type="ChEBI" id="CHEBI:30031"/>
        <dbReference type="ChEBI" id="CHEBI:30616"/>
        <dbReference type="ChEBI" id="CHEBI:43474"/>
        <dbReference type="ChEBI" id="CHEBI:57287"/>
        <dbReference type="ChEBI" id="CHEBI:57292"/>
        <dbReference type="ChEBI" id="CHEBI:456216"/>
        <dbReference type="EC" id="6.2.1.5"/>
    </reaction>
    <physiologicalReaction direction="right-to-left" evidence="1">
        <dbReference type="Rhea" id="RHEA:17663"/>
    </physiologicalReaction>
</comment>
<comment type="catalytic activity">
    <reaction evidence="1">
        <text>GTP + succinate + CoA = succinyl-CoA + GDP + phosphate</text>
        <dbReference type="Rhea" id="RHEA:22120"/>
        <dbReference type="ChEBI" id="CHEBI:30031"/>
        <dbReference type="ChEBI" id="CHEBI:37565"/>
        <dbReference type="ChEBI" id="CHEBI:43474"/>
        <dbReference type="ChEBI" id="CHEBI:57287"/>
        <dbReference type="ChEBI" id="CHEBI:57292"/>
        <dbReference type="ChEBI" id="CHEBI:58189"/>
    </reaction>
    <physiologicalReaction direction="right-to-left" evidence="1">
        <dbReference type="Rhea" id="RHEA:22122"/>
    </physiologicalReaction>
</comment>
<comment type="cofactor">
    <cofactor evidence="1">
        <name>Mg(2+)</name>
        <dbReference type="ChEBI" id="CHEBI:18420"/>
    </cofactor>
    <text evidence="1">Binds 1 Mg(2+) ion per subunit.</text>
</comment>
<comment type="pathway">
    <text evidence="1">Carbohydrate metabolism; tricarboxylic acid cycle; succinate from succinyl-CoA (ligase route): step 1/1.</text>
</comment>
<comment type="subunit">
    <text evidence="1">Heterotetramer of two alpha and two beta subunits.</text>
</comment>
<comment type="similarity">
    <text evidence="1">Belongs to the succinate/malate CoA ligase beta subunit family.</text>
</comment>